<protein>
    <recommendedName>
        <fullName>Uncharacterized protein MTH_531</fullName>
    </recommendedName>
</protein>
<accession>O26631</accession>
<gene>
    <name type="ordered locus">MTH_531</name>
</gene>
<organism>
    <name type="scientific">Methanothermobacter thermautotrophicus (strain ATCC 29096 / DSM 1053 / JCM 10044 / NBRC 100330 / Delta H)</name>
    <name type="common">Methanobacterium thermoautotrophicum</name>
    <dbReference type="NCBI Taxonomy" id="187420"/>
    <lineage>
        <taxon>Archaea</taxon>
        <taxon>Methanobacteriati</taxon>
        <taxon>Methanobacteriota</taxon>
        <taxon>Methanomada group</taxon>
        <taxon>Methanobacteria</taxon>
        <taxon>Methanobacteriales</taxon>
        <taxon>Methanobacteriaceae</taxon>
        <taxon>Methanothermobacter</taxon>
    </lineage>
</organism>
<evidence type="ECO:0000255" key="1"/>
<evidence type="ECO:0000305" key="2"/>
<name>Y531_METTH</name>
<proteinExistence type="inferred from homology"/>
<sequence>MIRNMKVLVIGAGNAGRPAARLLNHLNNRVLVNDVRELHELPLKAQKRIAEMEDEGVMFRFGGHSMEDILWADAVFISPNIPQDAPVRKMVREAGDLVHITTSDIGRTLNELIGLPMVGVAGTDGKTTTTNMIDHILSSRYRTVSFSSLQDSLVIEGLVELVVNGDIDDRDLAVFELPHGTIRMAEGLELSAGVVTNLTPDHMDEFSNYDEYIERNFSIKDLMAPGGVLALCGDDPVISSLLDDLEVENVVYGVGERRTVEFMGRRFMLSQYPGQGLRYRAEGTCRIHLHPECIRDTDSHLQHLRSPQLQET</sequence>
<comment type="similarity">
    <text evidence="2">Belongs to the MurCDEF family.</text>
</comment>
<reference key="1">
    <citation type="journal article" date="1997" name="J. Bacteriol.">
        <title>Complete genome sequence of Methanobacterium thermoautotrophicum deltaH: functional analysis and comparative genomics.</title>
        <authorList>
            <person name="Smith D.R."/>
            <person name="Doucette-Stamm L.A."/>
            <person name="Deloughery C."/>
            <person name="Lee H.-M."/>
            <person name="Dubois J."/>
            <person name="Aldredge T."/>
            <person name="Bashirzadeh R."/>
            <person name="Blakely D."/>
            <person name="Cook R."/>
            <person name="Gilbert K."/>
            <person name="Harrison D."/>
            <person name="Hoang L."/>
            <person name="Keagle P."/>
            <person name="Lumm W."/>
            <person name="Pothier B."/>
            <person name="Qiu D."/>
            <person name="Spadafora R."/>
            <person name="Vicare R."/>
            <person name="Wang Y."/>
            <person name="Wierzbowski J."/>
            <person name="Gibson R."/>
            <person name="Jiwani N."/>
            <person name="Caruso A."/>
            <person name="Bush D."/>
            <person name="Safer H."/>
            <person name="Patwell D."/>
            <person name="Prabhakar S."/>
            <person name="McDougall S."/>
            <person name="Shimer G."/>
            <person name="Goyal A."/>
            <person name="Pietrovski S."/>
            <person name="Church G.M."/>
            <person name="Daniels C.J."/>
            <person name="Mao J.-I."/>
            <person name="Rice P."/>
            <person name="Noelling J."/>
            <person name="Reeve J.N."/>
        </authorList>
    </citation>
    <scope>NUCLEOTIDE SEQUENCE [LARGE SCALE GENOMIC DNA]</scope>
    <source>
        <strain>ATCC 29096 / DSM 1053 / JCM 10044 / NBRC 100330 / Delta H</strain>
    </source>
</reference>
<keyword id="KW-0067">ATP-binding</keyword>
<keyword id="KW-0436">Ligase</keyword>
<keyword id="KW-0547">Nucleotide-binding</keyword>
<keyword id="KW-1185">Reference proteome</keyword>
<dbReference type="EMBL" id="AE000666">
    <property type="protein sequence ID" value="AAB85037.1"/>
    <property type="molecule type" value="Genomic_DNA"/>
</dbReference>
<dbReference type="PIR" id="B69170">
    <property type="entry name" value="B69170"/>
</dbReference>
<dbReference type="SMR" id="O26631"/>
<dbReference type="STRING" id="187420.MTH_531"/>
<dbReference type="PaxDb" id="187420-MTH_531"/>
<dbReference type="EnsemblBacteria" id="AAB85037">
    <property type="protein sequence ID" value="AAB85037"/>
    <property type="gene ID" value="MTH_531"/>
</dbReference>
<dbReference type="KEGG" id="mth:MTH_531"/>
<dbReference type="PATRIC" id="fig|187420.15.peg.510"/>
<dbReference type="HOGENOM" id="CLU_890302_0_0_2"/>
<dbReference type="InParanoid" id="O26631"/>
<dbReference type="Proteomes" id="UP000005223">
    <property type="component" value="Chromosome"/>
</dbReference>
<dbReference type="GO" id="GO:0005737">
    <property type="term" value="C:cytoplasm"/>
    <property type="evidence" value="ECO:0007669"/>
    <property type="project" value="InterPro"/>
</dbReference>
<dbReference type="GO" id="GO:0005524">
    <property type="term" value="F:ATP binding"/>
    <property type="evidence" value="ECO:0007669"/>
    <property type="project" value="UniProtKB-KW"/>
</dbReference>
<dbReference type="GO" id="GO:0008764">
    <property type="term" value="F:UDP-N-acetylmuramoylalanine-D-glutamate ligase activity"/>
    <property type="evidence" value="ECO:0007669"/>
    <property type="project" value="InterPro"/>
</dbReference>
<dbReference type="GO" id="GO:0009058">
    <property type="term" value="P:biosynthetic process"/>
    <property type="evidence" value="ECO:0007669"/>
    <property type="project" value="InterPro"/>
</dbReference>
<dbReference type="GO" id="GO:0051301">
    <property type="term" value="P:cell division"/>
    <property type="evidence" value="ECO:0007669"/>
    <property type="project" value="InterPro"/>
</dbReference>
<dbReference type="GO" id="GO:0008360">
    <property type="term" value="P:regulation of cell shape"/>
    <property type="evidence" value="ECO:0007669"/>
    <property type="project" value="InterPro"/>
</dbReference>
<dbReference type="Gene3D" id="3.40.1190.10">
    <property type="entry name" value="Mur-like, catalytic domain"/>
    <property type="match status" value="1"/>
</dbReference>
<dbReference type="Gene3D" id="3.40.50.720">
    <property type="entry name" value="NAD(P)-binding Rossmann-like Domain"/>
    <property type="match status" value="1"/>
</dbReference>
<dbReference type="InterPro" id="IPR036565">
    <property type="entry name" value="Mur-like_cat_sf"/>
</dbReference>
<dbReference type="InterPro" id="IPR013221">
    <property type="entry name" value="Mur_ligase_cen"/>
</dbReference>
<dbReference type="InterPro" id="IPR005762">
    <property type="entry name" value="MurD"/>
</dbReference>
<dbReference type="PANTHER" id="PTHR43692">
    <property type="entry name" value="UDP-N-ACETYLMURAMOYLALANINE--D-GLUTAMATE LIGASE"/>
    <property type="match status" value="1"/>
</dbReference>
<dbReference type="PANTHER" id="PTHR43692:SF1">
    <property type="entry name" value="UDP-N-ACETYLMURAMOYLALANINE--D-GLUTAMATE LIGASE"/>
    <property type="match status" value="1"/>
</dbReference>
<dbReference type="Pfam" id="PF08245">
    <property type="entry name" value="Mur_ligase_M"/>
    <property type="match status" value="1"/>
</dbReference>
<dbReference type="SUPFAM" id="SSF51984">
    <property type="entry name" value="MurCD N-terminal domain"/>
    <property type="match status" value="1"/>
</dbReference>
<dbReference type="SUPFAM" id="SSF53623">
    <property type="entry name" value="MurD-like peptide ligases, catalytic domain"/>
    <property type="match status" value="1"/>
</dbReference>
<feature type="chain" id="PRO_0000101710" description="Uncharacterized protein MTH_531">
    <location>
        <begin position="1"/>
        <end position="312"/>
    </location>
</feature>
<feature type="binding site" evidence="1">
    <location>
        <begin position="112"/>
        <end position="118"/>
    </location>
    <ligand>
        <name>ATP</name>
        <dbReference type="ChEBI" id="CHEBI:30616"/>
    </ligand>
</feature>